<gene>
    <name evidence="1" type="primary">gcvT</name>
    <name type="ordered locus">ECIAI1_3024</name>
</gene>
<accession>B7LYG9</accession>
<sequence>MAQQTPLYEQHTLCGARMVDFHGWMMPLHYGSQIDEHHAVRTDAGMFDVSHMTIVDLRGSRTREFLRYLLANDVAKLTKSGKALYSGMLNASGGVIDDLIVYYFTEDFFRLVVNSATREKDLSWITQHAEPFGIEITVRDDLSMIAVQGPNAQAKAATLFNDAQRQAVEGMKPFFGVQAGDLFIATTGYTGEAGYEIALPNEKAADFWRALVEAGVKPCGLGARDTLRLEAGMNLYGQEMDETISPLAANMGWTIAWEPADRDFIGREALEVQREHGTEKLVGLVMTEKGVLRNELPVRFTDAQGNQHEGIITSGTFSPTLGYSIALARVPEGIGETAIVQIRNREMPVKVTKPVFVRNGKAVA</sequence>
<reference key="1">
    <citation type="journal article" date="2009" name="PLoS Genet.">
        <title>Organised genome dynamics in the Escherichia coli species results in highly diverse adaptive paths.</title>
        <authorList>
            <person name="Touchon M."/>
            <person name="Hoede C."/>
            <person name="Tenaillon O."/>
            <person name="Barbe V."/>
            <person name="Baeriswyl S."/>
            <person name="Bidet P."/>
            <person name="Bingen E."/>
            <person name="Bonacorsi S."/>
            <person name="Bouchier C."/>
            <person name="Bouvet O."/>
            <person name="Calteau A."/>
            <person name="Chiapello H."/>
            <person name="Clermont O."/>
            <person name="Cruveiller S."/>
            <person name="Danchin A."/>
            <person name="Diard M."/>
            <person name="Dossat C."/>
            <person name="Karoui M.E."/>
            <person name="Frapy E."/>
            <person name="Garry L."/>
            <person name="Ghigo J.M."/>
            <person name="Gilles A.M."/>
            <person name="Johnson J."/>
            <person name="Le Bouguenec C."/>
            <person name="Lescat M."/>
            <person name="Mangenot S."/>
            <person name="Martinez-Jehanne V."/>
            <person name="Matic I."/>
            <person name="Nassif X."/>
            <person name="Oztas S."/>
            <person name="Petit M.A."/>
            <person name="Pichon C."/>
            <person name="Rouy Z."/>
            <person name="Ruf C.S."/>
            <person name="Schneider D."/>
            <person name="Tourret J."/>
            <person name="Vacherie B."/>
            <person name="Vallenet D."/>
            <person name="Medigue C."/>
            <person name="Rocha E.P.C."/>
            <person name="Denamur E."/>
        </authorList>
    </citation>
    <scope>NUCLEOTIDE SEQUENCE [LARGE SCALE GENOMIC DNA]</scope>
    <source>
        <strain>IAI1</strain>
    </source>
</reference>
<keyword id="KW-0032">Aminotransferase</keyword>
<keyword id="KW-0808">Transferase</keyword>
<evidence type="ECO:0000255" key="1">
    <source>
        <dbReference type="HAMAP-Rule" id="MF_00259"/>
    </source>
</evidence>
<comment type="function">
    <text evidence="1">The glycine cleavage system catalyzes the degradation of glycine.</text>
</comment>
<comment type="catalytic activity">
    <reaction evidence="1">
        <text>N(6)-[(R)-S(8)-aminomethyldihydrolipoyl]-L-lysyl-[protein] + (6S)-5,6,7,8-tetrahydrofolate = N(6)-[(R)-dihydrolipoyl]-L-lysyl-[protein] + (6R)-5,10-methylene-5,6,7,8-tetrahydrofolate + NH4(+)</text>
        <dbReference type="Rhea" id="RHEA:16945"/>
        <dbReference type="Rhea" id="RHEA-COMP:10475"/>
        <dbReference type="Rhea" id="RHEA-COMP:10492"/>
        <dbReference type="ChEBI" id="CHEBI:15636"/>
        <dbReference type="ChEBI" id="CHEBI:28938"/>
        <dbReference type="ChEBI" id="CHEBI:57453"/>
        <dbReference type="ChEBI" id="CHEBI:83100"/>
        <dbReference type="ChEBI" id="CHEBI:83143"/>
        <dbReference type="EC" id="2.1.2.10"/>
    </reaction>
</comment>
<comment type="subunit">
    <text evidence="1">The glycine cleavage system is composed of four proteins: P, T, L and H.</text>
</comment>
<comment type="similarity">
    <text evidence="1">Belongs to the GcvT family.</text>
</comment>
<feature type="chain" id="PRO_1000119199" description="Aminomethyltransferase">
    <location>
        <begin position="1"/>
        <end position="364"/>
    </location>
</feature>
<name>GCST_ECO8A</name>
<proteinExistence type="inferred from homology"/>
<protein>
    <recommendedName>
        <fullName evidence="1">Aminomethyltransferase</fullName>
        <ecNumber evidence="1">2.1.2.10</ecNumber>
    </recommendedName>
    <alternativeName>
        <fullName evidence="1">Glycine cleavage system T protein</fullName>
    </alternativeName>
</protein>
<organism>
    <name type="scientific">Escherichia coli O8 (strain IAI1)</name>
    <dbReference type="NCBI Taxonomy" id="585034"/>
    <lineage>
        <taxon>Bacteria</taxon>
        <taxon>Pseudomonadati</taxon>
        <taxon>Pseudomonadota</taxon>
        <taxon>Gammaproteobacteria</taxon>
        <taxon>Enterobacterales</taxon>
        <taxon>Enterobacteriaceae</taxon>
        <taxon>Escherichia</taxon>
    </lineage>
</organism>
<dbReference type="EC" id="2.1.2.10" evidence="1"/>
<dbReference type="EMBL" id="CU928160">
    <property type="protein sequence ID" value="CAQ99839.1"/>
    <property type="molecule type" value="Genomic_DNA"/>
</dbReference>
<dbReference type="RefSeq" id="WP_000068701.1">
    <property type="nucleotide sequence ID" value="NC_011741.1"/>
</dbReference>
<dbReference type="SMR" id="B7LYG9"/>
<dbReference type="GeneID" id="75205258"/>
<dbReference type="KEGG" id="ecr:ECIAI1_3024"/>
<dbReference type="HOGENOM" id="CLU_007884_10_2_6"/>
<dbReference type="GO" id="GO:0005829">
    <property type="term" value="C:cytosol"/>
    <property type="evidence" value="ECO:0007669"/>
    <property type="project" value="TreeGrafter"/>
</dbReference>
<dbReference type="GO" id="GO:0005960">
    <property type="term" value="C:glycine cleavage complex"/>
    <property type="evidence" value="ECO:0007669"/>
    <property type="project" value="InterPro"/>
</dbReference>
<dbReference type="GO" id="GO:0004047">
    <property type="term" value="F:aminomethyltransferase activity"/>
    <property type="evidence" value="ECO:0007669"/>
    <property type="project" value="UniProtKB-UniRule"/>
</dbReference>
<dbReference type="GO" id="GO:0008483">
    <property type="term" value="F:transaminase activity"/>
    <property type="evidence" value="ECO:0007669"/>
    <property type="project" value="UniProtKB-KW"/>
</dbReference>
<dbReference type="GO" id="GO:0019464">
    <property type="term" value="P:glycine decarboxylation via glycine cleavage system"/>
    <property type="evidence" value="ECO:0007669"/>
    <property type="project" value="UniProtKB-UniRule"/>
</dbReference>
<dbReference type="FunFam" id="2.40.30.110:FF:000001">
    <property type="entry name" value="Aminomethyltransferase"/>
    <property type="match status" value="1"/>
</dbReference>
<dbReference type="FunFam" id="3.30.70.1400:FF:000001">
    <property type="entry name" value="Aminomethyltransferase"/>
    <property type="match status" value="1"/>
</dbReference>
<dbReference type="FunFam" id="4.10.1250.10:FF:000001">
    <property type="entry name" value="Aminomethyltransferase"/>
    <property type="match status" value="1"/>
</dbReference>
<dbReference type="Gene3D" id="2.40.30.110">
    <property type="entry name" value="Aminomethyltransferase beta-barrel domains"/>
    <property type="match status" value="1"/>
</dbReference>
<dbReference type="Gene3D" id="3.30.70.1400">
    <property type="entry name" value="Aminomethyltransferase beta-barrel domains"/>
    <property type="match status" value="1"/>
</dbReference>
<dbReference type="Gene3D" id="4.10.1250.10">
    <property type="entry name" value="Aminomethyltransferase fragment"/>
    <property type="match status" value="1"/>
</dbReference>
<dbReference type="Gene3D" id="3.30.1360.120">
    <property type="entry name" value="Probable tRNA modification gtpase trme, domain 1"/>
    <property type="match status" value="1"/>
</dbReference>
<dbReference type="HAMAP" id="MF_00259">
    <property type="entry name" value="GcvT"/>
    <property type="match status" value="1"/>
</dbReference>
<dbReference type="InterPro" id="IPR006223">
    <property type="entry name" value="GCS_T"/>
</dbReference>
<dbReference type="InterPro" id="IPR022903">
    <property type="entry name" value="GCS_T_bac"/>
</dbReference>
<dbReference type="InterPro" id="IPR013977">
    <property type="entry name" value="GCST_C"/>
</dbReference>
<dbReference type="InterPro" id="IPR006222">
    <property type="entry name" value="GCV_T_N"/>
</dbReference>
<dbReference type="InterPro" id="IPR028896">
    <property type="entry name" value="GcvT/YgfZ/DmdA"/>
</dbReference>
<dbReference type="InterPro" id="IPR029043">
    <property type="entry name" value="GcvT/YgfZ_C"/>
</dbReference>
<dbReference type="InterPro" id="IPR027266">
    <property type="entry name" value="TrmE/GcvT_dom1"/>
</dbReference>
<dbReference type="NCBIfam" id="TIGR00528">
    <property type="entry name" value="gcvT"/>
    <property type="match status" value="1"/>
</dbReference>
<dbReference type="NCBIfam" id="NF001567">
    <property type="entry name" value="PRK00389.1"/>
    <property type="match status" value="1"/>
</dbReference>
<dbReference type="PANTHER" id="PTHR43757">
    <property type="entry name" value="AMINOMETHYLTRANSFERASE"/>
    <property type="match status" value="1"/>
</dbReference>
<dbReference type="PANTHER" id="PTHR43757:SF2">
    <property type="entry name" value="AMINOMETHYLTRANSFERASE, MITOCHONDRIAL"/>
    <property type="match status" value="1"/>
</dbReference>
<dbReference type="Pfam" id="PF01571">
    <property type="entry name" value="GCV_T"/>
    <property type="match status" value="1"/>
</dbReference>
<dbReference type="Pfam" id="PF08669">
    <property type="entry name" value="GCV_T_C"/>
    <property type="match status" value="1"/>
</dbReference>
<dbReference type="PIRSF" id="PIRSF006487">
    <property type="entry name" value="GcvT"/>
    <property type="match status" value="1"/>
</dbReference>
<dbReference type="SUPFAM" id="SSF101790">
    <property type="entry name" value="Aminomethyltransferase beta-barrel domain"/>
    <property type="match status" value="1"/>
</dbReference>
<dbReference type="SUPFAM" id="SSF103025">
    <property type="entry name" value="Folate-binding domain"/>
    <property type="match status" value="1"/>
</dbReference>